<evidence type="ECO:0000250" key="1"/>
<evidence type="ECO:0000250" key="2">
    <source>
        <dbReference type="UniProtKB" id="Q9NVA4"/>
    </source>
</evidence>
<evidence type="ECO:0000255" key="3"/>
<evidence type="ECO:0000256" key="4">
    <source>
        <dbReference type="SAM" id="MobiDB-lite"/>
    </source>
</evidence>
<evidence type="ECO:0000305" key="5"/>
<dbReference type="EMBL" id="CR857430">
    <property type="protein sequence ID" value="CAH89721.1"/>
    <property type="molecule type" value="mRNA"/>
</dbReference>
<dbReference type="RefSeq" id="NP_001127187.1">
    <property type="nucleotide sequence ID" value="NM_001133715.1"/>
</dbReference>
<dbReference type="FunCoup" id="Q5RET6">
    <property type="interactions" value="1459"/>
</dbReference>
<dbReference type="STRING" id="9601.ENSPPYP00000016880"/>
<dbReference type="GeneID" id="100174241"/>
<dbReference type="KEGG" id="pon:100174241"/>
<dbReference type="CTD" id="55751"/>
<dbReference type="InParanoid" id="Q5RET6"/>
<dbReference type="OrthoDB" id="5348404at2759"/>
<dbReference type="Proteomes" id="UP000001595">
    <property type="component" value="Unplaced"/>
</dbReference>
<dbReference type="GO" id="GO:0016020">
    <property type="term" value="C:membrane"/>
    <property type="evidence" value="ECO:0007669"/>
    <property type="project" value="UniProtKB-SubCell"/>
</dbReference>
<dbReference type="InterPro" id="IPR005178">
    <property type="entry name" value="Ostalpha/TMEM184C"/>
</dbReference>
<dbReference type="PANTHER" id="PTHR23423">
    <property type="entry name" value="ORGANIC SOLUTE TRANSPORTER-RELATED"/>
    <property type="match status" value="1"/>
</dbReference>
<dbReference type="Pfam" id="PF03619">
    <property type="entry name" value="Solute_trans_a"/>
    <property type="match status" value="1"/>
</dbReference>
<dbReference type="SMART" id="SM01417">
    <property type="entry name" value="Solute_trans_a"/>
    <property type="match status" value="1"/>
</dbReference>
<sequence length="438" mass="50161">MPCTCTWRNWRQWIRPLVAVIYLVSIVVAVPLCVWELQKLEVGIHTKAWFIAGIFLLLTIPISLWVILQHLVHYTQPELQKPIIRILWMVPIYSLDSWIALKYPGIAIYVDTCRECYEAYVIYNFMGFLTNYLTNRYPNLVLILEAKDQQKHFPPLCCCPPWAMGEVLLFRCKLGVLQYTVVRPFTTIVALICELLGIYDEGNFSFSNAWTYLVIINNMSQLFAMYCLLLFYKVLKEELSPIQPVGKFLCVKLVVFVSFWQAVVIALLVKVGVISEKHTWEWQTVEAVATGLQDFIICIEMFLAAIAHHYTFSYKPYVQEAEEGSCFDSFLAMWDVSDIRDDISEQVRRVGRTVRGHPRKKLFPEDQDQNEHTSLLSSSSQDAISIASSMPPSPMGHYQGFGHTVTPQTTPTTAKISDEILSDTIGEKKEPSDKSVDS</sequence>
<name>T184C_PONAB</name>
<reference key="1">
    <citation type="submission" date="2004-11" db="EMBL/GenBank/DDBJ databases">
        <authorList>
            <consortium name="The German cDNA consortium"/>
        </authorList>
    </citation>
    <scope>NUCLEOTIDE SEQUENCE [LARGE SCALE MRNA]</scope>
    <source>
        <tissue>Kidney</tissue>
    </source>
</reference>
<proteinExistence type="evidence at transcript level"/>
<comment type="function">
    <text evidence="1">Possible tumor suppressor which may play a role in cell growth.</text>
</comment>
<comment type="subcellular location">
    <subcellularLocation>
        <location evidence="5">Membrane</location>
        <topology evidence="5">Multi-pass membrane protein</topology>
    </subcellularLocation>
</comment>
<comment type="similarity">
    <text evidence="5">Belongs to the TMEM184 family.</text>
</comment>
<accession>Q5RET6</accession>
<protein>
    <recommendedName>
        <fullName>Transmembrane protein 184C</fullName>
    </recommendedName>
    <alternativeName>
        <fullName>Transmembrane protein 34</fullName>
    </alternativeName>
</protein>
<keyword id="KW-0472">Membrane</keyword>
<keyword id="KW-0597">Phosphoprotein</keyword>
<keyword id="KW-1185">Reference proteome</keyword>
<keyword id="KW-0812">Transmembrane</keyword>
<keyword id="KW-1133">Transmembrane helix</keyword>
<gene>
    <name type="primary">TMEM184C</name>
    <name type="synonym">TMEM34</name>
</gene>
<feature type="chain" id="PRO_0000287569" description="Transmembrane protein 184C">
    <location>
        <begin position="1"/>
        <end position="438"/>
    </location>
</feature>
<feature type="transmembrane region" description="Helical" evidence="3">
    <location>
        <begin position="17"/>
        <end position="37"/>
    </location>
</feature>
<feature type="transmembrane region" description="Helical" evidence="3">
    <location>
        <begin position="48"/>
        <end position="68"/>
    </location>
</feature>
<feature type="transmembrane region" description="Helical" evidence="3">
    <location>
        <begin position="86"/>
        <end position="106"/>
    </location>
</feature>
<feature type="transmembrane region" description="Helical" evidence="3">
    <location>
        <begin position="179"/>
        <end position="199"/>
    </location>
</feature>
<feature type="transmembrane region" description="Helical" evidence="3">
    <location>
        <begin position="212"/>
        <end position="232"/>
    </location>
</feature>
<feature type="transmembrane region" description="Helical" evidence="3">
    <location>
        <begin position="254"/>
        <end position="274"/>
    </location>
</feature>
<feature type="transmembrane region" description="Helical" evidence="3">
    <location>
        <begin position="287"/>
        <end position="307"/>
    </location>
</feature>
<feature type="region of interest" description="Disordered" evidence="4">
    <location>
        <begin position="358"/>
        <end position="438"/>
    </location>
</feature>
<feature type="compositionally biased region" description="Low complexity" evidence="4">
    <location>
        <begin position="374"/>
        <end position="390"/>
    </location>
</feature>
<feature type="compositionally biased region" description="Low complexity" evidence="4">
    <location>
        <begin position="404"/>
        <end position="413"/>
    </location>
</feature>
<feature type="compositionally biased region" description="Basic and acidic residues" evidence="4">
    <location>
        <begin position="425"/>
        <end position="438"/>
    </location>
</feature>
<feature type="modified residue" description="Phosphoserine" evidence="2">
    <location>
        <position position="422"/>
    </location>
</feature>
<organism>
    <name type="scientific">Pongo abelii</name>
    <name type="common">Sumatran orangutan</name>
    <name type="synonym">Pongo pygmaeus abelii</name>
    <dbReference type="NCBI Taxonomy" id="9601"/>
    <lineage>
        <taxon>Eukaryota</taxon>
        <taxon>Metazoa</taxon>
        <taxon>Chordata</taxon>
        <taxon>Craniata</taxon>
        <taxon>Vertebrata</taxon>
        <taxon>Euteleostomi</taxon>
        <taxon>Mammalia</taxon>
        <taxon>Eutheria</taxon>
        <taxon>Euarchontoglires</taxon>
        <taxon>Primates</taxon>
        <taxon>Haplorrhini</taxon>
        <taxon>Catarrhini</taxon>
        <taxon>Hominidae</taxon>
        <taxon>Pongo</taxon>
    </lineage>
</organism>